<keyword id="KW-0051">Antiviral defense</keyword>
<keyword id="KW-0202">Cytokine</keyword>
<keyword id="KW-1015">Disulfide bond</keyword>
<keyword id="KW-1185">Reference proteome</keyword>
<keyword id="KW-0964">Secreted</keyword>
<keyword id="KW-0732">Signal</keyword>
<dbReference type="EMBL" id="M10954">
    <property type="protein sequence ID" value="AAA30575.1"/>
    <property type="molecule type" value="Genomic_DNA"/>
</dbReference>
<dbReference type="EMBL" id="M29314">
    <property type="protein sequence ID" value="AAA30572.1"/>
    <property type="molecule type" value="mRNA"/>
</dbReference>
<dbReference type="PIR" id="C26028">
    <property type="entry name" value="IVBOIC"/>
</dbReference>
<dbReference type="RefSeq" id="NP_776510.1">
    <property type="nucleotide sequence ID" value="NM_174085.1"/>
</dbReference>
<dbReference type="SMR" id="P05009"/>
<dbReference type="FunCoup" id="P05009">
    <property type="interactions" value="322"/>
</dbReference>
<dbReference type="PaxDb" id="9913-ENSBTAP00000052390"/>
<dbReference type="GeneID" id="281236"/>
<dbReference type="KEGG" id="bta:281236"/>
<dbReference type="CTD" id="281236"/>
<dbReference type="eggNOG" id="ENOG502SQAC">
    <property type="taxonomic scope" value="Eukaryota"/>
</dbReference>
<dbReference type="InParanoid" id="P05009"/>
<dbReference type="OrthoDB" id="9481177at2759"/>
<dbReference type="Proteomes" id="UP000009136">
    <property type="component" value="Unplaced"/>
</dbReference>
<dbReference type="GO" id="GO:0005615">
    <property type="term" value="C:extracellular space"/>
    <property type="evidence" value="ECO:0000318"/>
    <property type="project" value="GO_Central"/>
</dbReference>
<dbReference type="GO" id="GO:0005125">
    <property type="term" value="F:cytokine activity"/>
    <property type="evidence" value="ECO:0000318"/>
    <property type="project" value="GO_Central"/>
</dbReference>
<dbReference type="GO" id="GO:0005132">
    <property type="term" value="F:type I interferon receptor binding"/>
    <property type="evidence" value="ECO:0000318"/>
    <property type="project" value="GO_Central"/>
</dbReference>
<dbReference type="GO" id="GO:0002250">
    <property type="term" value="P:adaptive immune response"/>
    <property type="evidence" value="ECO:0000318"/>
    <property type="project" value="GO_Central"/>
</dbReference>
<dbReference type="GO" id="GO:0002312">
    <property type="term" value="P:B cell activation involved in immune response"/>
    <property type="evidence" value="ECO:0000318"/>
    <property type="project" value="GO_Central"/>
</dbReference>
<dbReference type="GO" id="GO:0051607">
    <property type="term" value="P:defense response to virus"/>
    <property type="evidence" value="ECO:0007669"/>
    <property type="project" value="UniProtKB-KW"/>
</dbReference>
<dbReference type="GO" id="GO:0006959">
    <property type="term" value="P:humoral immune response"/>
    <property type="evidence" value="ECO:0000318"/>
    <property type="project" value="GO_Central"/>
</dbReference>
<dbReference type="GO" id="GO:0002323">
    <property type="term" value="P:natural killer cell activation involved in immune response"/>
    <property type="evidence" value="ECO:0000318"/>
    <property type="project" value="GO_Central"/>
</dbReference>
<dbReference type="GO" id="GO:0009891">
    <property type="term" value="P:positive regulation of biosynthetic process"/>
    <property type="evidence" value="ECO:0007669"/>
    <property type="project" value="UniProtKB-ARBA"/>
</dbReference>
<dbReference type="GO" id="GO:0043330">
    <property type="term" value="P:response to exogenous dsRNA"/>
    <property type="evidence" value="ECO:0000318"/>
    <property type="project" value="GO_Central"/>
</dbReference>
<dbReference type="GO" id="GO:0002286">
    <property type="term" value="P:T cell activation involved in immune response"/>
    <property type="evidence" value="ECO:0000318"/>
    <property type="project" value="GO_Central"/>
</dbReference>
<dbReference type="GO" id="GO:0060337">
    <property type="term" value="P:type I interferon-mediated signaling pathway"/>
    <property type="evidence" value="ECO:0000318"/>
    <property type="project" value="GO_Central"/>
</dbReference>
<dbReference type="CDD" id="cd00095">
    <property type="entry name" value="IFab"/>
    <property type="match status" value="1"/>
</dbReference>
<dbReference type="FunFam" id="1.20.1250.10:FF:000001">
    <property type="entry name" value="Interferon alpha"/>
    <property type="match status" value="1"/>
</dbReference>
<dbReference type="Gene3D" id="1.20.1250.10">
    <property type="match status" value="1"/>
</dbReference>
<dbReference type="InterPro" id="IPR009079">
    <property type="entry name" value="4_helix_cytokine-like_core"/>
</dbReference>
<dbReference type="InterPro" id="IPR000471">
    <property type="entry name" value="Interferon_alpha/beta/delta"/>
</dbReference>
<dbReference type="PANTHER" id="PTHR11691:SF60">
    <property type="entry name" value="INTERFERON ALPHA-5"/>
    <property type="match status" value="1"/>
</dbReference>
<dbReference type="PANTHER" id="PTHR11691">
    <property type="entry name" value="TYPE I INTERFERON"/>
    <property type="match status" value="1"/>
</dbReference>
<dbReference type="Pfam" id="PF00143">
    <property type="entry name" value="Interferon"/>
    <property type="match status" value="1"/>
</dbReference>
<dbReference type="PRINTS" id="PR00266">
    <property type="entry name" value="INTERFERONAB"/>
</dbReference>
<dbReference type="SMART" id="SM00076">
    <property type="entry name" value="IFabd"/>
    <property type="match status" value="1"/>
</dbReference>
<dbReference type="SUPFAM" id="SSF47266">
    <property type="entry name" value="4-helical cytokines"/>
    <property type="match status" value="1"/>
</dbReference>
<dbReference type="PROSITE" id="PS00252">
    <property type="entry name" value="INTERFERON_A_B_D"/>
    <property type="match status" value="1"/>
</dbReference>
<evidence type="ECO:0000250" key="1"/>
<evidence type="ECO:0000305" key="2"/>
<comment type="function">
    <text>Produced by macrophages, IFN-alpha have antiviral activities. Interferon stimulates the production of two enzymes: a protein kinase and an oligoadenylate synthetase.</text>
</comment>
<comment type="subcellular location">
    <subcellularLocation>
        <location>Secreted</location>
    </subcellularLocation>
</comment>
<comment type="similarity">
    <text evidence="2">Belongs to the alpha/beta interferon family.</text>
</comment>
<reference key="1">
    <citation type="journal article" date="1985" name="J. Biol. Chem.">
        <title>Bovine interferon alpha genes. Structure and expression.</title>
        <authorList>
            <person name="Velan B."/>
            <person name="Cohen S."/>
            <person name="Grosfeld H."/>
            <person name="Leitner M."/>
            <person name="Shafferman A."/>
        </authorList>
    </citation>
    <scope>NUCLEOTIDE SEQUENCE [GENOMIC DNA]</scope>
</reference>
<reference key="2">
    <citation type="journal article" date="1986" name="Methods Enzymol.">
        <title>Isolation of bovine IFN-alpha genes and their expression in bacteria.</title>
        <authorList>
            <person name="Velan B."/>
            <person name="Cohen S."/>
            <person name="Grosfeld H."/>
            <person name="Shafferman A."/>
        </authorList>
    </citation>
    <scope>NUCLEOTIDE SEQUENCE [MRNA]</scope>
</reference>
<gene>
    <name type="primary">IFNAC</name>
</gene>
<feature type="signal peptide">
    <location>
        <begin position="1"/>
        <end position="23"/>
    </location>
</feature>
<feature type="chain" id="PRO_0000016387" description="Interferon alpha-C">
    <location>
        <begin position="24"/>
        <end position="189"/>
    </location>
</feature>
<feature type="disulfide bond" evidence="1">
    <location>
        <begin position="24"/>
        <end position="122"/>
    </location>
</feature>
<feature type="disulfide bond" evidence="1">
    <location>
        <begin position="52"/>
        <end position="162"/>
    </location>
</feature>
<sequence length="189" mass="21572">MAPAWSFRLALLLLSCNAICSLGCHLPHTHSLANRRVLMLLGQLRRVSPSSCLQDRNDFAFPQEALGGSQLQKAQAISVLHEVTQHTFQLFSTEGSATMWDESLLDKLRDALDQQLTDLQFCLRQEEELQGAPLLKEDSSLAVRKYFHRLTLYLQEKRHSPCAWEVVRAQVMRAFSSSTNLQESFRRKD</sequence>
<organism>
    <name type="scientific">Bos taurus</name>
    <name type="common">Bovine</name>
    <dbReference type="NCBI Taxonomy" id="9913"/>
    <lineage>
        <taxon>Eukaryota</taxon>
        <taxon>Metazoa</taxon>
        <taxon>Chordata</taxon>
        <taxon>Craniata</taxon>
        <taxon>Vertebrata</taxon>
        <taxon>Euteleostomi</taxon>
        <taxon>Mammalia</taxon>
        <taxon>Eutheria</taxon>
        <taxon>Laurasiatheria</taxon>
        <taxon>Artiodactyla</taxon>
        <taxon>Ruminantia</taxon>
        <taxon>Pecora</taxon>
        <taxon>Bovidae</taxon>
        <taxon>Bovinae</taxon>
        <taxon>Bos</taxon>
    </lineage>
</organism>
<protein>
    <recommendedName>
        <fullName>Interferon alpha-C</fullName>
    </recommendedName>
</protein>
<name>IFNAC_BOVIN</name>
<accession>P05009</accession>
<proteinExistence type="evidence at transcript level"/>